<protein>
    <recommendedName>
        <fullName>Bacteriocin plantaricin-A</fullName>
    </recommendedName>
</protein>
<evidence type="ECO:0000269" key="1">
    <source>
    </source>
</evidence>
<evidence type="ECO:0007829" key="2">
    <source>
        <dbReference type="PDB" id="1YTR"/>
    </source>
</evidence>
<dbReference type="EMBL" id="X75323">
    <property type="protein sequence ID" value="CAA53069.1"/>
    <property type="molecule type" value="Genomic_DNA"/>
</dbReference>
<dbReference type="EMBL" id="X94434">
    <property type="protein sequence ID" value="CAA64204.1"/>
    <property type="molecule type" value="Genomic_DNA"/>
</dbReference>
<dbReference type="EMBL" id="AL935263">
    <property type="protein sequence ID" value="CCC77922.1"/>
    <property type="molecule type" value="Genomic_DNA"/>
</dbReference>
<dbReference type="PIR" id="A45913">
    <property type="entry name" value="A45913"/>
</dbReference>
<dbReference type="RefSeq" id="WP_003641979.1">
    <property type="nucleotide sequence ID" value="NC_004567.2"/>
</dbReference>
<dbReference type="RefSeq" id="YP_004888436.1">
    <property type="nucleotide sequence ID" value="NC_004567.2"/>
</dbReference>
<dbReference type="PDB" id="1YTR">
    <property type="method" value="NMR"/>
    <property type="chains" value="A=23-48"/>
</dbReference>
<dbReference type="PDBsum" id="1YTR"/>
<dbReference type="BMRB" id="P80214"/>
<dbReference type="SMR" id="P80214"/>
<dbReference type="STRING" id="220668.lp_0415"/>
<dbReference type="TCDB" id="1.C.22.1.6">
    <property type="family name" value="the lactococcin a (lactococcin a) family"/>
</dbReference>
<dbReference type="EnsemblBacteria" id="CCC77922">
    <property type="protein sequence ID" value="CCC77922"/>
    <property type="gene ID" value="lp_0415"/>
</dbReference>
<dbReference type="KEGG" id="lpl:lp_0415"/>
<dbReference type="eggNOG" id="ENOG5032N8N">
    <property type="taxonomic scope" value="Bacteria"/>
</dbReference>
<dbReference type="HOGENOM" id="CLU_3154236_0_0_9"/>
<dbReference type="OrthoDB" id="9871363at2"/>
<dbReference type="Proteomes" id="UP000000432">
    <property type="component" value="Chromosome"/>
</dbReference>
<dbReference type="GO" id="GO:0042742">
    <property type="term" value="P:defense response to bacterium"/>
    <property type="evidence" value="ECO:0007669"/>
    <property type="project" value="UniProtKB-KW"/>
</dbReference>
<dbReference type="GO" id="GO:0031640">
    <property type="term" value="P:killing of cells of another organism"/>
    <property type="evidence" value="ECO:0007669"/>
    <property type="project" value="UniProtKB-KW"/>
</dbReference>
<dbReference type="InterPro" id="IPR010133">
    <property type="entry name" value="Bacteriocin_signal_seq"/>
</dbReference>
<dbReference type="NCBIfam" id="TIGR01847">
    <property type="entry name" value="bacteriocin_sig"/>
    <property type="match status" value="1"/>
</dbReference>
<reference key="1">
    <citation type="journal article" date="1994" name="Appl. Environ. Microbiol.">
        <title>The gene encoding plantaricin A, a bacteriocin from Lactobacillus plantarum C11, is located on the same transcription unit as an agr-like regulatory system.</title>
        <authorList>
            <person name="Diep B.D."/>
            <person name="Havarstein L.S."/>
            <person name="Nissen-Meyer J."/>
            <person name="Nes F.I."/>
        </authorList>
    </citation>
    <scope>NUCLEOTIDE SEQUENCE [GENOMIC DNA]</scope>
    <source>
        <strain>C11</strain>
    </source>
</reference>
<reference key="2">
    <citation type="journal article" date="1996" name="J. Bacteriol.">
        <title>Characterization of the locus responsible for the bacteriocin production in Lactobacillus plantarum C11.</title>
        <authorList>
            <person name="Diep D.B."/>
            <person name="Havarstein L.S."/>
            <person name="Nes I.F."/>
        </authorList>
    </citation>
    <scope>NUCLEOTIDE SEQUENCE [GENOMIC DNA]</scope>
    <source>
        <strain>C11</strain>
    </source>
</reference>
<reference key="3">
    <citation type="journal article" date="2003" name="Proc. Natl. Acad. Sci. U.S.A.">
        <title>Complete genome sequence of Lactobacillus plantarum WCFS1.</title>
        <authorList>
            <person name="Kleerebezem M."/>
            <person name="Boekhorst J."/>
            <person name="van Kranenburg R."/>
            <person name="Molenaar D."/>
            <person name="Kuipers O.P."/>
            <person name="Leer R."/>
            <person name="Tarchini R."/>
            <person name="Peters S.A."/>
            <person name="Sandbrink H.M."/>
            <person name="Fiers M.W.E.J."/>
            <person name="Stiekema W."/>
            <person name="Klein Lankhorst R.M."/>
            <person name="Bron P.A."/>
            <person name="Hoffer S.M."/>
            <person name="Nierop Groot M.N."/>
            <person name="Kerkhoven R."/>
            <person name="De Vries M."/>
            <person name="Ursing B."/>
            <person name="De Vos W.M."/>
            <person name="Siezen R.J."/>
        </authorList>
    </citation>
    <scope>NUCLEOTIDE SEQUENCE [LARGE SCALE GENOMIC DNA]</scope>
    <source>
        <strain>ATCC BAA-793 / NCIMB 8826 / WCFS1</strain>
    </source>
</reference>
<reference key="4">
    <citation type="journal article" date="2012" name="J. Bacteriol.">
        <title>Complete resequencing and reannotation of the Lactobacillus plantarum WCFS1 genome.</title>
        <authorList>
            <person name="Siezen R.J."/>
            <person name="Francke C."/>
            <person name="Renckens B."/>
            <person name="Boekhorst J."/>
            <person name="Wels M."/>
            <person name="Kleerebezem M."/>
            <person name="van Hijum S.A."/>
        </authorList>
    </citation>
    <scope>NUCLEOTIDE SEQUENCE [LARGE SCALE GENOMIC DNA]</scope>
    <scope>GENOME REANNOTATION</scope>
    <source>
        <strain>ATCC BAA-793 / NCIMB 8826 / WCFS1</strain>
    </source>
</reference>
<reference key="5">
    <citation type="journal article" date="1993" name="J. Gen. Microbiol.">
        <title>Purification and characterization of plantaricin A, a Lactobacillus plantarum bacteriocin whose activity depends on the action of two peptides.</title>
        <authorList>
            <person name="Nissen-Meyer J."/>
            <person name="Granly Larsen A.G."/>
            <person name="Sletten K."/>
            <person name="Daeschel M."/>
            <person name="Nes I.F."/>
        </authorList>
    </citation>
    <scope>PROTEIN SEQUENCE OF 26-47</scope>
    <source>
        <strain>C11</strain>
    </source>
</reference>
<accession>P80214</accession>
<accession>F9UU02</accession>
<keyword id="KW-0002">3D-structure</keyword>
<keyword id="KW-0044">Antibiotic</keyword>
<keyword id="KW-0929">Antimicrobial</keyword>
<keyword id="KW-0078">Bacteriocin</keyword>
<keyword id="KW-0903">Direct protein sequencing</keyword>
<keyword id="KW-1185">Reference proteome</keyword>
<gene>
    <name type="primary">plnA</name>
    <name type="ordered locus">lp_0415</name>
</gene>
<comment type="function">
    <text>This heat stable bacteriocin inhibits the growth of closely related Lactobacillus species. It may act as a pore-forming protein, creating a channel in the cell membrane through a 'barrel stave' mechanism.</text>
</comment>
<comment type="subunit">
    <text>Active plantaricin A is composed of an alpha chain and a beta chain.</text>
</comment>
<comment type="miscellaneous">
    <text>The beta chain sequence is shown.</text>
</comment>
<organism>
    <name type="scientific">Lactiplantibacillus plantarum (strain ATCC BAA-793 / NCIMB 8826 / WCFS1)</name>
    <name type="common">Lactobacillus plantarum</name>
    <dbReference type="NCBI Taxonomy" id="220668"/>
    <lineage>
        <taxon>Bacteria</taxon>
        <taxon>Bacillati</taxon>
        <taxon>Bacillota</taxon>
        <taxon>Bacilli</taxon>
        <taxon>Lactobacillales</taxon>
        <taxon>Lactobacillaceae</taxon>
        <taxon>Lactiplantibacillus</taxon>
    </lineage>
</organism>
<name>PLNA_LACPL</name>
<proteinExistence type="evidence at protein level"/>
<sequence>MKIQIKGMKQLSNKEMQKIVGGKSSAYSLQMGATAIKQVKKLFKKWGW</sequence>
<feature type="propeptide" id="PRO_0000002776" evidence="1">
    <location>
        <begin position="1"/>
        <end position="25"/>
    </location>
</feature>
<feature type="peptide" id="PRO_0000002777" description="Bacteriocin plantaricin-A">
    <location>
        <begin position="26"/>
        <end position="48"/>
    </location>
</feature>
<feature type="sequence variant" description="In the alpha chain.">
    <location>
        <position position="26"/>
    </location>
</feature>
<feature type="strand" evidence="2">
    <location>
        <begin position="31"/>
        <end position="33"/>
    </location>
</feature>
<feature type="helix" evidence="2">
    <location>
        <begin position="34"/>
        <end position="43"/>
    </location>
</feature>